<sequence length="479" mass="53120">MSTKGKHPRADQGTDPFEEKLQRLKEAFNTGKTKTAKFRAEQLQSLGRFLQDNSKQLHDALDGDLGKSGFESDMSEIILCENEVDLALKNLQTWMKDEPVSTNLLTKLSTAFIRKEPFGLVLIIAPWNYPVNLMIIPLVGAIAAGNCVVLKPSEISKNTEKVLAELLPQYLDQSCFAVMLGGPEETGQLLEHKFDYIFFTGSPRVGKIVMTAAAKHLTPITLELGGKNPCYVDDNCDPQTVANRVAWFRYFNAGQTCVAPDYILCSQEMQEQLVPALQNAITRFYGDNPQTSPNLGRIINQKHFKRLQGLLGCGRVAIGGQSDEGERYIAPTVLVDVQETEPVMQEEIFGPILPLVTVRSLDEAIEFMNQREKPLALYAYSNNAEVIKQVLARTSSGGFCGNDGFMYMTLSSLPFGGVGSSGMGRYHGKFSFDTFSNQRACLLSCPGMEKLNGLRYPPYSPRRQQLLRWAIGSESCTLL</sequence>
<keyword id="KW-1003">Cell membrane</keyword>
<keyword id="KW-0449">Lipoprotein</keyword>
<keyword id="KW-0472">Membrane</keyword>
<keyword id="KW-0520">NAD</keyword>
<keyword id="KW-0560">Oxidoreductase</keyword>
<keyword id="KW-0636">Prenylation</keyword>
<keyword id="KW-1185">Reference proteome</keyword>
<comment type="function">
    <text evidence="4">Oxidizes medium and long chain aldehydes into non-toxic fatty acids.</text>
</comment>
<comment type="catalytic activity">
    <reaction evidence="4">
        <text>an aldehyde + NAD(+) + H2O = a carboxylate + NADH + 2 H(+)</text>
        <dbReference type="Rhea" id="RHEA:16185"/>
        <dbReference type="ChEBI" id="CHEBI:15377"/>
        <dbReference type="ChEBI" id="CHEBI:15378"/>
        <dbReference type="ChEBI" id="CHEBI:17478"/>
        <dbReference type="ChEBI" id="CHEBI:29067"/>
        <dbReference type="ChEBI" id="CHEBI:57540"/>
        <dbReference type="ChEBI" id="CHEBI:57945"/>
        <dbReference type="EC" id="1.2.1.3"/>
    </reaction>
</comment>
<comment type="catalytic activity">
    <reaction evidence="4">
        <text>hexadecanoate + NADH + 2 H(+) = hexadecanal + NAD(+) + H2O</text>
        <dbReference type="Rhea" id="RHEA:33739"/>
        <dbReference type="ChEBI" id="CHEBI:7896"/>
        <dbReference type="ChEBI" id="CHEBI:15377"/>
        <dbReference type="ChEBI" id="CHEBI:15378"/>
        <dbReference type="ChEBI" id="CHEBI:17600"/>
        <dbReference type="ChEBI" id="CHEBI:57540"/>
        <dbReference type="ChEBI" id="CHEBI:57945"/>
    </reaction>
</comment>
<comment type="catalytic activity">
    <reaction evidence="4">
        <text>octanal + NAD(+) + H2O = octanoate + NADH + 2 H(+)</text>
        <dbReference type="Rhea" id="RHEA:44100"/>
        <dbReference type="ChEBI" id="CHEBI:15377"/>
        <dbReference type="ChEBI" id="CHEBI:15378"/>
        <dbReference type="ChEBI" id="CHEBI:17935"/>
        <dbReference type="ChEBI" id="CHEBI:25646"/>
        <dbReference type="ChEBI" id="CHEBI:57540"/>
        <dbReference type="ChEBI" id="CHEBI:57945"/>
    </reaction>
</comment>
<comment type="subcellular location">
    <subcellularLocation>
        <location evidence="4">Cell membrane</location>
        <topology evidence="6">Lipid-anchor</topology>
    </subcellularLocation>
</comment>
<comment type="tissue specificity">
    <text evidence="4">Expressed in testis, kidney, small intestine, spleen, white adipose tissue, liver and lung.</text>
</comment>
<comment type="PTM">
    <text evidence="4">Geranylgeranylation is important for membrane localization and enzyme activity.</text>
</comment>
<comment type="similarity">
    <text evidence="1">Belongs to the aldehyde dehydrogenase family.</text>
</comment>
<comment type="sequence caution" evidence="5">
    <conflict type="miscellaneous discrepancy">
        <sequence resource="EMBL-CDS" id="BAB24748"/>
    </conflict>
    <text>Probable cloning artifact.</text>
</comment>
<gene>
    <name evidence="8" type="primary">Aldh3b3</name>
</gene>
<reference evidence="9" key="1">
    <citation type="journal article" date="2009" name="PLoS Biol.">
        <title>Lineage-specific biology revealed by a finished genome assembly of the mouse.</title>
        <authorList>
            <person name="Church D.M."/>
            <person name="Goodstadt L."/>
            <person name="Hillier L.W."/>
            <person name="Zody M.C."/>
            <person name="Goldstein S."/>
            <person name="She X."/>
            <person name="Bult C.J."/>
            <person name="Agarwala R."/>
            <person name="Cherry J.L."/>
            <person name="DiCuccio M."/>
            <person name="Hlavina W."/>
            <person name="Kapustin Y."/>
            <person name="Meric P."/>
            <person name="Maglott D."/>
            <person name="Birtle Z."/>
            <person name="Marques A.C."/>
            <person name="Graves T."/>
            <person name="Zhou S."/>
            <person name="Teague B."/>
            <person name="Potamousis K."/>
            <person name="Churas C."/>
            <person name="Place M."/>
            <person name="Herschleb J."/>
            <person name="Runnheim R."/>
            <person name="Forrest D."/>
            <person name="Amos-Landgraf J."/>
            <person name="Schwartz D.C."/>
            <person name="Cheng Z."/>
            <person name="Lindblad-Toh K."/>
            <person name="Eichler E.E."/>
            <person name="Ponting C.P."/>
        </authorList>
    </citation>
    <scope>NUCLEOTIDE SEQUENCE [LARGE SCALE GENOMIC DNA]</scope>
    <source>
        <strain evidence="9">C57BL/6J</strain>
    </source>
</reference>
<reference evidence="7" key="2">
    <citation type="journal article" date="2005" name="Science">
        <title>The transcriptional landscape of the mammalian genome.</title>
        <authorList>
            <person name="Carninci P."/>
            <person name="Kasukawa T."/>
            <person name="Katayama S."/>
            <person name="Gough J."/>
            <person name="Frith M.C."/>
            <person name="Maeda N."/>
            <person name="Oyama R."/>
            <person name="Ravasi T."/>
            <person name="Lenhard B."/>
            <person name="Wells C."/>
            <person name="Kodzius R."/>
            <person name="Shimokawa K."/>
            <person name="Bajic V.B."/>
            <person name="Brenner S.E."/>
            <person name="Batalov S."/>
            <person name="Forrest A.R."/>
            <person name="Zavolan M."/>
            <person name="Davis M.J."/>
            <person name="Wilming L.G."/>
            <person name="Aidinis V."/>
            <person name="Allen J.E."/>
            <person name="Ambesi-Impiombato A."/>
            <person name="Apweiler R."/>
            <person name="Aturaliya R.N."/>
            <person name="Bailey T.L."/>
            <person name="Bansal M."/>
            <person name="Baxter L."/>
            <person name="Beisel K.W."/>
            <person name="Bersano T."/>
            <person name="Bono H."/>
            <person name="Chalk A.M."/>
            <person name="Chiu K.P."/>
            <person name="Choudhary V."/>
            <person name="Christoffels A."/>
            <person name="Clutterbuck D.R."/>
            <person name="Crowe M.L."/>
            <person name="Dalla E."/>
            <person name="Dalrymple B.P."/>
            <person name="de Bono B."/>
            <person name="Della Gatta G."/>
            <person name="di Bernardo D."/>
            <person name="Down T."/>
            <person name="Engstrom P."/>
            <person name="Fagiolini M."/>
            <person name="Faulkner G."/>
            <person name="Fletcher C.F."/>
            <person name="Fukushima T."/>
            <person name="Furuno M."/>
            <person name="Futaki S."/>
            <person name="Gariboldi M."/>
            <person name="Georgii-Hemming P."/>
            <person name="Gingeras T.R."/>
            <person name="Gojobori T."/>
            <person name="Green R.E."/>
            <person name="Gustincich S."/>
            <person name="Harbers M."/>
            <person name="Hayashi Y."/>
            <person name="Hensch T.K."/>
            <person name="Hirokawa N."/>
            <person name="Hill D."/>
            <person name="Huminiecki L."/>
            <person name="Iacono M."/>
            <person name="Ikeo K."/>
            <person name="Iwama A."/>
            <person name="Ishikawa T."/>
            <person name="Jakt M."/>
            <person name="Kanapin A."/>
            <person name="Katoh M."/>
            <person name="Kawasawa Y."/>
            <person name="Kelso J."/>
            <person name="Kitamura H."/>
            <person name="Kitano H."/>
            <person name="Kollias G."/>
            <person name="Krishnan S.P."/>
            <person name="Kruger A."/>
            <person name="Kummerfeld S.K."/>
            <person name="Kurochkin I.V."/>
            <person name="Lareau L.F."/>
            <person name="Lazarevic D."/>
            <person name="Lipovich L."/>
            <person name="Liu J."/>
            <person name="Liuni S."/>
            <person name="McWilliam S."/>
            <person name="Madan Babu M."/>
            <person name="Madera M."/>
            <person name="Marchionni L."/>
            <person name="Matsuda H."/>
            <person name="Matsuzawa S."/>
            <person name="Miki H."/>
            <person name="Mignone F."/>
            <person name="Miyake S."/>
            <person name="Morris K."/>
            <person name="Mottagui-Tabar S."/>
            <person name="Mulder N."/>
            <person name="Nakano N."/>
            <person name="Nakauchi H."/>
            <person name="Ng P."/>
            <person name="Nilsson R."/>
            <person name="Nishiguchi S."/>
            <person name="Nishikawa S."/>
            <person name="Nori F."/>
            <person name="Ohara O."/>
            <person name="Okazaki Y."/>
            <person name="Orlando V."/>
            <person name="Pang K.C."/>
            <person name="Pavan W.J."/>
            <person name="Pavesi G."/>
            <person name="Pesole G."/>
            <person name="Petrovsky N."/>
            <person name="Piazza S."/>
            <person name="Reed J."/>
            <person name="Reid J.F."/>
            <person name="Ring B.Z."/>
            <person name="Ringwald M."/>
            <person name="Rost B."/>
            <person name="Ruan Y."/>
            <person name="Salzberg S.L."/>
            <person name="Sandelin A."/>
            <person name="Schneider C."/>
            <person name="Schoenbach C."/>
            <person name="Sekiguchi K."/>
            <person name="Semple C.A."/>
            <person name="Seno S."/>
            <person name="Sessa L."/>
            <person name="Sheng Y."/>
            <person name="Shibata Y."/>
            <person name="Shimada H."/>
            <person name="Shimada K."/>
            <person name="Silva D."/>
            <person name="Sinclair B."/>
            <person name="Sperling S."/>
            <person name="Stupka E."/>
            <person name="Sugiura K."/>
            <person name="Sultana R."/>
            <person name="Takenaka Y."/>
            <person name="Taki K."/>
            <person name="Tammoja K."/>
            <person name="Tan S.L."/>
            <person name="Tang S."/>
            <person name="Taylor M.S."/>
            <person name="Tegner J."/>
            <person name="Teichmann S.A."/>
            <person name="Ueda H.R."/>
            <person name="van Nimwegen E."/>
            <person name="Verardo R."/>
            <person name="Wei C.L."/>
            <person name="Yagi K."/>
            <person name="Yamanishi H."/>
            <person name="Zabarovsky E."/>
            <person name="Zhu S."/>
            <person name="Zimmer A."/>
            <person name="Hide W."/>
            <person name="Bult C."/>
            <person name="Grimmond S.M."/>
            <person name="Teasdale R.D."/>
            <person name="Liu E.T."/>
            <person name="Brusic V."/>
            <person name="Quackenbush J."/>
            <person name="Wahlestedt C."/>
            <person name="Mattick J.S."/>
            <person name="Hume D.A."/>
            <person name="Kai C."/>
            <person name="Sasaki D."/>
            <person name="Tomaru Y."/>
            <person name="Fukuda S."/>
            <person name="Kanamori-Katayama M."/>
            <person name="Suzuki M."/>
            <person name="Aoki J."/>
            <person name="Arakawa T."/>
            <person name="Iida J."/>
            <person name="Imamura K."/>
            <person name="Itoh M."/>
            <person name="Kato T."/>
            <person name="Kawaji H."/>
            <person name="Kawagashira N."/>
            <person name="Kawashima T."/>
            <person name="Kojima M."/>
            <person name="Kondo S."/>
            <person name="Konno H."/>
            <person name="Nakano K."/>
            <person name="Ninomiya N."/>
            <person name="Nishio T."/>
            <person name="Okada M."/>
            <person name="Plessy C."/>
            <person name="Shibata K."/>
            <person name="Shiraki T."/>
            <person name="Suzuki S."/>
            <person name="Tagami M."/>
            <person name="Waki K."/>
            <person name="Watahiki A."/>
            <person name="Okamura-Oho Y."/>
            <person name="Suzuki H."/>
            <person name="Kawai J."/>
            <person name="Hayashizaki Y."/>
        </authorList>
    </citation>
    <scope>PARTIAL NUCLEOTIDE SEQUENCE [LARGE SCALE MRNA]</scope>
    <source>
        <strain evidence="7">C57BL/6J</strain>
        <tissue evidence="7">Testis</tissue>
    </source>
</reference>
<reference evidence="5" key="3">
    <citation type="journal article" date="2015" name="Biochem. J.">
        <title>Mouse aldehyde dehydrogenase ALDH3B2 is localized to lipid droplets via two C-terminal tryptophan residues and lipid modification.</title>
        <authorList>
            <person name="Kitamura T."/>
            <person name="Takagi S."/>
            <person name="Naganuma T."/>
            <person name="Kihara A."/>
        </authorList>
    </citation>
    <scope>FUNCTION</scope>
    <scope>CATALYTIC ACTIVITY</scope>
    <scope>SUBCELLULAR LOCATION</scope>
    <scope>TISSUE SPECIFICITY</scope>
    <scope>MUTAGENESIS OF 462-ARG-ARG-463</scope>
    <scope>ISOPRENYLATION AT CYS-476</scope>
</reference>
<dbReference type="EC" id="1.2.1.3" evidence="4"/>
<dbReference type="EMBL" id="AC133523">
    <property type="status" value="NOT_ANNOTATED_CDS"/>
    <property type="molecule type" value="Genomic_DNA"/>
</dbReference>
<dbReference type="EMBL" id="AK006803">
    <property type="protein sequence ID" value="BAB24748.1"/>
    <property type="status" value="ALT_SEQ"/>
    <property type="molecule type" value="mRNA"/>
</dbReference>
<dbReference type="CCDS" id="CCDS57128.1"/>
<dbReference type="RefSeq" id="NP_082821.2">
    <property type="nucleotide sequence ID" value="NM_028545.2"/>
</dbReference>
<dbReference type="SMR" id="J3QMK6"/>
<dbReference type="FunCoup" id="J3QMK6">
    <property type="interactions" value="472"/>
</dbReference>
<dbReference type="IntAct" id="J3QMK6">
    <property type="interactions" value="1"/>
</dbReference>
<dbReference type="STRING" id="10090.ENSMUSP00000136334"/>
<dbReference type="SwissLipids" id="SLP:000001744"/>
<dbReference type="iPTMnet" id="J3QMK6"/>
<dbReference type="PhosphoSitePlus" id="J3QMK6"/>
<dbReference type="jPOST" id="J3QMK6"/>
<dbReference type="PaxDb" id="10090-ENSMUSP00000136334"/>
<dbReference type="PeptideAtlas" id="J3QMK6"/>
<dbReference type="ProteomicsDB" id="282070"/>
<dbReference type="Pumba" id="J3QMK6"/>
<dbReference type="DNASU" id="73458"/>
<dbReference type="Ensembl" id="ENSMUST00000179433.8">
    <property type="protein sequence ID" value="ENSMUSP00000136334.2"/>
    <property type="gene ID" value="ENSMUSG00000037263.14"/>
</dbReference>
<dbReference type="GeneID" id="73458"/>
<dbReference type="KEGG" id="mmu:73458"/>
<dbReference type="UCSC" id="uc029tql.1">
    <property type="organism name" value="mouse"/>
</dbReference>
<dbReference type="AGR" id="MGI:1920708"/>
<dbReference type="CTD" id="73458"/>
<dbReference type="MGI" id="MGI:1920708">
    <property type="gene designation" value="Aldh3b3"/>
</dbReference>
<dbReference type="VEuPathDB" id="HostDB:ENSMUSG00000037263"/>
<dbReference type="eggNOG" id="KOG2456">
    <property type="taxonomic scope" value="Eukaryota"/>
</dbReference>
<dbReference type="GeneTree" id="ENSGT00940000155904"/>
<dbReference type="HOGENOM" id="CLU_005391_3_1_1"/>
<dbReference type="InParanoid" id="J3QMK6"/>
<dbReference type="OMA" id="AVANCIV"/>
<dbReference type="OrthoDB" id="440325at2759"/>
<dbReference type="PhylomeDB" id="J3QMK6"/>
<dbReference type="TreeFam" id="TF314264"/>
<dbReference type="BRENDA" id="1.2.1.48">
    <property type="organism ID" value="3474"/>
</dbReference>
<dbReference type="BioGRID-ORCS" id="73458">
    <property type="hits" value="3 hits in 82 CRISPR screens"/>
</dbReference>
<dbReference type="PRO" id="PR:J3QMK6"/>
<dbReference type="Proteomes" id="UP000000589">
    <property type="component" value="Chromosome 19"/>
</dbReference>
<dbReference type="RNAct" id="J3QMK6">
    <property type="molecule type" value="protein"/>
</dbReference>
<dbReference type="Bgee" id="ENSMUSG00000037263">
    <property type="expression patterns" value="Expressed in granulocyte and 41 other cell types or tissues"/>
</dbReference>
<dbReference type="ExpressionAtlas" id="J3QMK6">
    <property type="expression patterns" value="baseline and differential"/>
</dbReference>
<dbReference type="GO" id="GO:0005737">
    <property type="term" value="C:cytoplasm"/>
    <property type="evidence" value="ECO:0000314"/>
    <property type="project" value="MGI"/>
</dbReference>
<dbReference type="GO" id="GO:0005886">
    <property type="term" value="C:plasma membrane"/>
    <property type="evidence" value="ECO:0000314"/>
    <property type="project" value="MGI"/>
</dbReference>
<dbReference type="GO" id="GO:0004029">
    <property type="term" value="F:aldehyde dehydrogenase (NAD+) activity"/>
    <property type="evidence" value="ECO:0000314"/>
    <property type="project" value="MGI"/>
</dbReference>
<dbReference type="GO" id="GO:0006081">
    <property type="term" value="P:aldehyde metabolic process"/>
    <property type="evidence" value="ECO:0000305"/>
    <property type="project" value="MGI"/>
</dbReference>
<dbReference type="CDD" id="cd07132">
    <property type="entry name" value="ALDH_F3AB"/>
    <property type="match status" value="1"/>
</dbReference>
<dbReference type="FunFam" id="3.40.309.10:FF:000003">
    <property type="entry name" value="Aldehyde dehydrogenase"/>
    <property type="match status" value="1"/>
</dbReference>
<dbReference type="FunFam" id="3.40.605.10:FF:000004">
    <property type="entry name" value="Aldehyde dehydrogenase"/>
    <property type="match status" value="1"/>
</dbReference>
<dbReference type="Gene3D" id="3.40.605.10">
    <property type="entry name" value="Aldehyde Dehydrogenase, Chain A, domain 1"/>
    <property type="match status" value="1"/>
</dbReference>
<dbReference type="Gene3D" id="3.40.309.10">
    <property type="entry name" value="Aldehyde Dehydrogenase, Chain A, domain 2"/>
    <property type="match status" value="1"/>
</dbReference>
<dbReference type="InterPro" id="IPR016161">
    <property type="entry name" value="Ald_DH/histidinol_DH"/>
</dbReference>
<dbReference type="InterPro" id="IPR016163">
    <property type="entry name" value="Ald_DH_C"/>
</dbReference>
<dbReference type="InterPro" id="IPR016160">
    <property type="entry name" value="Ald_DH_CS_CYS"/>
</dbReference>
<dbReference type="InterPro" id="IPR029510">
    <property type="entry name" value="Ald_DH_CS_GLU"/>
</dbReference>
<dbReference type="InterPro" id="IPR016162">
    <property type="entry name" value="Ald_DH_N"/>
</dbReference>
<dbReference type="InterPro" id="IPR015590">
    <property type="entry name" value="Aldehyde_DH_dom"/>
</dbReference>
<dbReference type="InterPro" id="IPR012394">
    <property type="entry name" value="Aldehyde_DH_NAD(P)"/>
</dbReference>
<dbReference type="PANTHER" id="PTHR43570">
    <property type="entry name" value="ALDEHYDE DEHYDROGENASE"/>
    <property type="match status" value="1"/>
</dbReference>
<dbReference type="PANTHER" id="PTHR43570:SF12">
    <property type="entry name" value="ALDEHYDE DEHYDROGENASE FAMILY 3 MEMBER B3"/>
    <property type="match status" value="1"/>
</dbReference>
<dbReference type="Pfam" id="PF00171">
    <property type="entry name" value="Aldedh"/>
    <property type="match status" value="1"/>
</dbReference>
<dbReference type="PIRSF" id="PIRSF036492">
    <property type="entry name" value="ALDH"/>
    <property type="match status" value="1"/>
</dbReference>
<dbReference type="SUPFAM" id="SSF53720">
    <property type="entry name" value="ALDH-like"/>
    <property type="match status" value="1"/>
</dbReference>
<dbReference type="PROSITE" id="PS00070">
    <property type="entry name" value="ALDEHYDE_DEHYDR_CYS"/>
    <property type="match status" value="1"/>
</dbReference>
<dbReference type="PROSITE" id="PS00687">
    <property type="entry name" value="ALDEHYDE_DEHYDR_GLU"/>
    <property type="match status" value="1"/>
</dbReference>
<organism evidence="9">
    <name type="scientific">Mus musculus</name>
    <name type="common">Mouse</name>
    <dbReference type="NCBI Taxonomy" id="10090"/>
    <lineage>
        <taxon>Eukaryota</taxon>
        <taxon>Metazoa</taxon>
        <taxon>Chordata</taxon>
        <taxon>Craniata</taxon>
        <taxon>Vertebrata</taxon>
        <taxon>Euteleostomi</taxon>
        <taxon>Mammalia</taxon>
        <taxon>Eutheria</taxon>
        <taxon>Euarchontoglires</taxon>
        <taxon>Glires</taxon>
        <taxon>Rodentia</taxon>
        <taxon>Myomorpha</taxon>
        <taxon>Muroidea</taxon>
        <taxon>Muridae</taxon>
        <taxon>Murinae</taxon>
        <taxon>Mus</taxon>
        <taxon>Mus</taxon>
    </lineage>
</organism>
<proteinExistence type="evidence at protein level"/>
<name>AL3B3_MOUSE</name>
<feature type="chain" id="PRO_0000436530" description="Aldehyde dehydrogenase family 3 member B3">
    <location>
        <begin position="1"/>
        <end position="479"/>
    </location>
</feature>
<feature type="propeptide" id="PRO_0000436531" description="Removed in mature form" evidence="6">
    <location>
        <begin position="477"/>
        <end position="479"/>
    </location>
</feature>
<feature type="active site" evidence="2">
    <location>
        <position position="223"/>
    </location>
</feature>
<feature type="active site" evidence="3">
    <location>
        <position position="257"/>
    </location>
</feature>
<feature type="lipid moiety-binding region" description="S-geranylgeranyl cysteine" evidence="6">
    <location>
        <position position="476"/>
    </location>
</feature>
<feature type="mutagenesis site" description="Reduces membrane localization." evidence="4">
    <original>RR</original>
    <variation>AA</variation>
    <location>
        <begin position="462"/>
        <end position="463"/>
    </location>
</feature>
<evidence type="ECO:0000255" key="1">
    <source>
        <dbReference type="PIRNR" id="PIRNR036492"/>
    </source>
</evidence>
<evidence type="ECO:0000255" key="2">
    <source>
        <dbReference type="PROSITE-ProRule" id="PRU10007"/>
    </source>
</evidence>
<evidence type="ECO:0000255" key="3">
    <source>
        <dbReference type="PROSITE-ProRule" id="PRU10008"/>
    </source>
</evidence>
<evidence type="ECO:0000269" key="4">
    <source>
    </source>
</evidence>
<evidence type="ECO:0000305" key="5"/>
<evidence type="ECO:0000305" key="6">
    <source>
    </source>
</evidence>
<evidence type="ECO:0000312" key="7">
    <source>
        <dbReference type="EMBL" id="BAB24748.1"/>
    </source>
</evidence>
<evidence type="ECO:0000312" key="8">
    <source>
        <dbReference type="MGI" id="MGI:1920708"/>
    </source>
</evidence>
<evidence type="ECO:0000312" key="9">
    <source>
        <dbReference type="Proteomes" id="UP000000589"/>
    </source>
</evidence>
<accession>J3QMK6</accession>
<accession>Q9D9K6</accession>
<protein>
    <recommendedName>
        <fullName evidence="8">Aldehyde dehydrogenase family 3 member B3</fullName>
        <ecNumber evidence="4">1.2.1.3</ecNumber>
    </recommendedName>
</protein>